<name>ATPB_EMIHU</name>
<evidence type="ECO:0000255" key="1">
    <source>
        <dbReference type="HAMAP-Rule" id="MF_01347"/>
    </source>
</evidence>
<feature type="chain" id="PRO_0000254472" description="ATP synthase subunit beta, chloroplastic">
    <location>
        <begin position="1"/>
        <end position="476"/>
    </location>
</feature>
<feature type="binding site" evidence="1">
    <location>
        <begin position="155"/>
        <end position="162"/>
    </location>
    <ligand>
        <name>ATP</name>
        <dbReference type="ChEBI" id="CHEBI:30616"/>
    </ligand>
</feature>
<protein>
    <recommendedName>
        <fullName evidence="1">ATP synthase subunit beta, chloroplastic</fullName>
        <ecNumber evidence="1">7.1.2.2</ecNumber>
    </recommendedName>
    <alternativeName>
        <fullName evidence="1">ATP synthase F1 sector subunit beta</fullName>
    </alternativeName>
    <alternativeName>
        <fullName evidence="1">F-ATPase subunit beta</fullName>
    </alternativeName>
</protein>
<dbReference type="EC" id="7.1.2.2" evidence="1"/>
<dbReference type="EMBL" id="AY675517">
    <property type="protein sequence ID" value="AAU81899.1"/>
    <property type="molecule type" value="Genomic_DNA"/>
</dbReference>
<dbReference type="EMBL" id="AY741371">
    <property type="protein sequence ID" value="AAX13838.1"/>
    <property type="molecule type" value="Genomic_DNA"/>
</dbReference>
<dbReference type="RefSeq" id="YP_277339.1">
    <property type="nucleotide sequence ID" value="NC_007288.1"/>
</dbReference>
<dbReference type="SMR" id="Q4G3C8"/>
<dbReference type="STRING" id="2903.Q4G3C8"/>
<dbReference type="GeneID" id="3562515"/>
<dbReference type="GO" id="GO:0009535">
    <property type="term" value="C:chloroplast thylakoid membrane"/>
    <property type="evidence" value="ECO:0007669"/>
    <property type="project" value="UniProtKB-SubCell"/>
</dbReference>
<dbReference type="GO" id="GO:0005739">
    <property type="term" value="C:mitochondrion"/>
    <property type="evidence" value="ECO:0007669"/>
    <property type="project" value="GOC"/>
</dbReference>
<dbReference type="GO" id="GO:0045259">
    <property type="term" value="C:proton-transporting ATP synthase complex"/>
    <property type="evidence" value="ECO:0007669"/>
    <property type="project" value="UniProtKB-KW"/>
</dbReference>
<dbReference type="GO" id="GO:0005524">
    <property type="term" value="F:ATP binding"/>
    <property type="evidence" value="ECO:0007669"/>
    <property type="project" value="UniProtKB-UniRule"/>
</dbReference>
<dbReference type="GO" id="GO:0016887">
    <property type="term" value="F:ATP hydrolysis activity"/>
    <property type="evidence" value="ECO:0007669"/>
    <property type="project" value="InterPro"/>
</dbReference>
<dbReference type="GO" id="GO:0046933">
    <property type="term" value="F:proton-transporting ATP synthase activity, rotational mechanism"/>
    <property type="evidence" value="ECO:0007669"/>
    <property type="project" value="UniProtKB-UniRule"/>
</dbReference>
<dbReference type="GO" id="GO:0042776">
    <property type="term" value="P:proton motive force-driven mitochondrial ATP synthesis"/>
    <property type="evidence" value="ECO:0007669"/>
    <property type="project" value="TreeGrafter"/>
</dbReference>
<dbReference type="CDD" id="cd18110">
    <property type="entry name" value="ATP-synt_F1_beta_C"/>
    <property type="match status" value="1"/>
</dbReference>
<dbReference type="CDD" id="cd18115">
    <property type="entry name" value="ATP-synt_F1_beta_N"/>
    <property type="match status" value="1"/>
</dbReference>
<dbReference type="CDD" id="cd01133">
    <property type="entry name" value="F1-ATPase_beta_CD"/>
    <property type="match status" value="1"/>
</dbReference>
<dbReference type="FunFam" id="1.10.1140.10:FF:000001">
    <property type="entry name" value="ATP synthase subunit beta"/>
    <property type="match status" value="1"/>
</dbReference>
<dbReference type="FunFam" id="3.40.50.12240:FF:000006">
    <property type="entry name" value="ATP synthase subunit beta"/>
    <property type="match status" value="1"/>
</dbReference>
<dbReference type="FunFam" id="3.40.50.300:FF:000026">
    <property type="entry name" value="ATP synthase subunit beta"/>
    <property type="match status" value="1"/>
</dbReference>
<dbReference type="Gene3D" id="2.40.10.170">
    <property type="match status" value="1"/>
</dbReference>
<dbReference type="Gene3D" id="1.10.1140.10">
    <property type="entry name" value="Bovine Mitochondrial F1-atpase, Atp Synthase Beta Chain, Chain D, domain 3"/>
    <property type="match status" value="1"/>
</dbReference>
<dbReference type="Gene3D" id="3.40.50.300">
    <property type="entry name" value="P-loop containing nucleotide triphosphate hydrolases"/>
    <property type="match status" value="1"/>
</dbReference>
<dbReference type="HAMAP" id="MF_01347">
    <property type="entry name" value="ATP_synth_beta_bact"/>
    <property type="match status" value="1"/>
</dbReference>
<dbReference type="InterPro" id="IPR003593">
    <property type="entry name" value="AAA+_ATPase"/>
</dbReference>
<dbReference type="InterPro" id="IPR055190">
    <property type="entry name" value="ATP-synt_VA_C"/>
</dbReference>
<dbReference type="InterPro" id="IPR005722">
    <property type="entry name" value="ATP_synth_F1_bsu"/>
</dbReference>
<dbReference type="InterPro" id="IPR020003">
    <property type="entry name" value="ATPase_a/bsu_AS"/>
</dbReference>
<dbReference type="InterPro" id="IPR050053">
    <property type="entry name" value="ATPase_alpha/beta_chains"/>
</dbReference>
<dbReference type="InterPro" id="IPR004100">
    <property type="entry name" value="ATPase_F1/V1/A1_a/bsu_N"/>
</dbReference>
<dbReference type="InterPro" id="IPR036121">
    <property type="entry name" value="ATPase_F1/V1/A1_a/bsu_N_sf"/>
</dbReference>
<dbReference type="InterPro" id="IPR000194">
    <property type="entry name" value="ATPase_F1/V1/A1_a/bsu_nucl-bd"/>
</dbReference>
<dbReference type="InterPro" id="IPR024034">
    <property type="entry name" value="ATPase_F1/V1_b/a_C"/>
</dbReference>
<dbReference type="InterPro" id="IPR027417">
    <property type="entry name" value="P-loop_NTPase"/>
</dbReference>
<dbReference type="NCBIfam" id="TIGR01039">
    <property type="entry name" value="atpD"/>
    <property type="match status" value="1"/>
</dbReference>
<dbReference type="PANTHER" id="PTHR15184">
    <property type="entry name" value="ATP SYNTHASE"/>
    <property type="match status" value="1"/>
</dbReference>
<dbReference type="PANTHER" id="PTHR15184:SF71">
    <property type="entry name" value="ATP SYNTHASE SUBUNIT BETA, MITOCHONDRIAL"/>
    <property type="match status" value="1"/>
</dbReference>
<dbReference type="Pfam" id="PF00006">
    <property type="entry name" value="ATP-synt_ab"/>
    <property type="match status" value="1"/>
</dbReference>
<dbReference type="Pfam" id="PF02874">
    <property type="entry name" value="ATP-synt_ab_N"/>
    <property type="match status" value="1"/>
</dbReference>
<dbReference type="Pfam" id="PF22919">
    <property type="entry name" value="ATP-synt_VA_C"/>
    <property type="match status" value="1"/>
</dbReference>
<dbReference type="SMART" id="SM00382">
    <property type="entry name" value="AAA"/>
    <property type="match status" value="1"/>
</dbReference>
<dbReference type="SUPFAM" id="SSF47917">
    <property type="entry name" value="C-terminal domain of alpha and beta subunits of F1 ATP synthase"/>
    <property type="match status" value="1"/>
</dbReference>
<dbReference type="SUPFAM" id="SSF50615">
    <property type="entry name" value="N-terminal domain of alpha and beta subunits of F1 ATP synthase"/>
    <property type="match status" value="1"/>
</dbReference>
<dbReference type="SUPFAM" id="SSF52540">
    <property type="entry name" value="P-loop containing nucleoside triphosphate hydrolases"/>
    <property type="match status" value="1"/>
</dbReference>
<dbReference type="PROSITE" id="PS00152">
    <property type="entry name" value="ATPASE_ALPHA_BETA"/>
    <property type="match status" value="1"/>
</dbReference>
<proteinExistence type="inferred from homology"/>
<geneLocation type="chloroplast"/>
<comment type="function">
    <text evidence="1">Produces ATP from ADP in the presence of a proton gradient across the membrane. The catalytic sites are hosted primarily by the beta subunits.</text>
</comment>
<comment type="catalytic activity">
    <reaction evidence="1">
        <text>ATP + H2O + 4 H(+)(in) = ADP + phosphate + 5 H(+)(out)</text>
        <dbReference type="Rhea" id="RHEA:57720"/>
        <dbReference type="ChEBI" id="CHEBI:15377"/>
        <dbReference type="ChEBI" id="CHEBI:15378"/>
        <dbReference type="ChEBI" id="CHEBI:30616"/>
        <dbReference type="ChEBI" id="CHEBI:43474"/>
        <dbReference type="ChEBI" id="CHEBI:456216"/>
        <dbReference type="EC" id="7.1.2.2"/>
    </reaction>
</comment>
<comment type="subunit">
    <text evidence="1">F-type ATPases have 2 components, CF(1) - the catalytic core - and CF(0) - the membrane proton channel. CF(1) has five subunits: alpha(3), beta(3), gamma(1), delta(1), epsilon(1). CF(0) has four main subunits: a(1), b(1), b'(1) and c(9-12).</text>
</comment>
<comment type="subcellular location">
    <subcellularLocation>
        <location evidence="1">Plastid</location>
        <location evidence="1">Chloroplast thylakoid membrane</location>
        <topology evidence="1">Peripheral membrane protein</topology>
    </subcellularLocation>
</comment>
<comment type="similarity">
    <text evidence="1">Belongs to the ATPase alpha/beta chains family.</text>
</comment>
<organism>
    <name type="scientific">Emiliania huxleyi</name>
    <name type="common">Coccolithophore</name>
    <name type="synonym">Pontosphaera huxleyi</name>
    <dbReference type="NCBI Taxonomy" id="2903"/>
    <lineage>
        <taxon>Eukaryota</taxon>
        <taxon>Haptista</taxon>
        <taxon>Haptophyta</taxon>
        <taxon>Prymnesiophyceae</taxon>
        <taxon>Isochrysidales</taxon>
        <taxon>Noelaerhabdaceae</taxon>
        <taxon>Emiliania</taxon>
    </lineage>
</organism>
<sequence length="476" mass="50767">MVDTASKTGFISQIIGPVVDVEFPGGELPTVYSAIVVGEGESSVTCEVQQLLGSNKVRAVSMTSTDGLKRGAAVVNTGAPITVPVGVPTLGRIFNVLGEPVDEMGPCEATAGLPIHRAAPAFTDLDTKPSVFETGIKVVDLLAPYKRGGKIGLFGGAGVGKTVLIMELINNIARAHGGVSVFGGVGERTREGNDLYAEMKESGVIDEKKLDNSKVALVYGQMNEPPGARMRVGLTALTMAEYFRDVNKQDVLLFIDNIFRFVQAGSEVSALLGRMPSAVGYQPTLATEMGVLQERITSTTEGSITSIQAVYVPADDLTDPAPATTFAHLDATTVLSRGLASKGIYPAVDPLDSTSTMLQPEIVGAEHYATAQNIKETLQRYKELQDIIAILGLDELSEEDRLTVARARKVERFLSQPFFVAEVFTGSPGKYVSLADSIDGFNRLLDGEFDDLPEQSFYLVGDINEAIEKAAKINAK</sequence>
<gene>
    <name evidence="1" type="primary">atpB</name>
</gene>
<accession>Q4G3C8</accession>
<reference key="1">
    <citation type="journal article" date="2006" name="J. Mol. Evol.">
        <title>Rate variation as a function of gene origin in plastid-derived genes of peridinin-containing dinoflagellates.</title>
        <authorList>
            <person name="Bachvaroff T.R."/>
            <person name="Sanchez-Puerta M.V."/>
            <person name="Delwiche C.F."/>
        </authorList>
    </citation>
    <scope>NUCLEOTIDE SEQUENCE [GENOMIC DNA]</scope>
    <source>
        <strain>CCMP373 / CSIRO-CS-57 / BT6</strain>
    </source>
</reference>
<reference key="2">
    <citation type="journal article" date="2005" name="DNA Res.">
        <title>The complete plastid genome sequence of the haptophyte Emiliania huxleyi: a comparison to other plastid genomes.</title>
        <authorList>
            <person name="Sanchez-Puerta M.V."/>
            <person name="Bachvaroff T.R."/>
            <person name="Delwiche C.F."/>
        </authorList>
    </citation>
    <scope>NUCLEOTIDE SEQUENCE [LARGE SCALE GENOMIC DNA]</scope>
    <source>
        <strain>CCMP373 / CSIRO-CS-57 / BT6</strain>
    </source>
</reference>
<keyword id="KW-0066">ATP synthesis</keyword>
<keyword id="KW-0067">ATP-binding</keyword>
<keyword id="KW-0139">CF(1)</keyword>
<keyword id="KW-0150">Chloroplast</keyword>
<keyword id="KW-0375">Hydrogen ion transport</keyword>
<keyword id="KW-0406">Ion transport</keyword>
<keyword id="KW-0472">Membrane</keyword>
<keyword id="KW-0547">Nucleotide-binding</keyword>
<keyword id="KW-0934">Plastid</keyword>
<keyword id="KW-0793">Thylakoid</keyword>
<keyword id="KW-1278">Translocase</keyword>
<keyword id="KW-0813">Transport</keyword>